<accession>B1YJS1</accession>
<comment type="PTM">
    <text evidence="1">The N-terminus is cleaved by ribosomal processing cysteine protease Prp.</text>
</comment>
<comment type="similarity">
    <text evidence="2">Belongs to the bacterial ribosomal protein bL27 family.</text>
</comment>
<keyword id="KW-1185">Reference proteome</keyword>
<keyword id="KW-0687">Ribonucleoprotein</keyword>
<keyword id="KW-0689">Ribosomal protein</keyword>
<evidence type="ECO:0000250" key="1">
    <source>
        <dbReference type="UniProtKB" id="Q2FXT0"/>
    </source>
</evidence>
<evidence type="ECO:0000255" key="2">
    <source>
        <dbReference type="HAMAP-Rule" id="MF_00539"/>
    </source>
</evidence>
<evidence type="ECO:0000256" key="3">
    <source>
        <dbReference type="SAM" id="MobiDB-lite"/>
    </source>
</evidence>
<evidence type="ECO:0000305" key="4"/>
<proteinExistence type="inferred from homology"/>
<organism>
    <name type="scientific">Exiguobacterium sibiricum (strain DSM 17290 / CCUG 55495 / CIP 109462 / JCM 13490 / 255-15)</name>
    <dbReference type="NCBI Taxonomy" id="262543"/>
    <lineage>
        <taxon>Bacteria</taxon>
        <taxon>Bacillati</taxon>
        <taxon>Bacillota</taxon>
        <taxon>Bacilli</taxon>
        <taxon>Bacillales</taxon>
        <taxon>Bacillales Family XII. Incertae Sedis</taxon>
        <taxon>Exiguobacterium</taxon>
    </lineage>
</organism>
<dbReference type="EMBL" id="CP001022">
    <property type="protein sequence ID" value="ACB61559.1"/>
    <property type="molecule type" value="Genomic_DNA"/>
</dbReference>
<dbReference type="RefSeq" id="WP_012370976.1">
    <property type="nucleotide sequence ID" value="NC_010556.1"/>
</dbReference>
<dbReference type="SMR" id="B1YJS1"/>
<dbReference type="STRING" id="262543.Exig_2107"/>
<dbReference type="GeneID" id="90837362"/>
<dbReference type="KEGG" id="esi:Exig_2107"/>
<dbReference type="eggNOG" id="COG0211">
    <property type="taxonomic scope" value="Bacteria"/>
</dbReference>
<dbReference type="HOGENOM" id="CLU_095424_4_0_9"/>
<dbReference type="OrthoDB" id="9803474at2"/>
<dbReference type="Proteomes" id="UP000001681">
    <property type="component" value="Chromosome"/>
</dbReference>
<dbReference type="GO" id="GO:0022625">
    <property type="term" value="C:cytosolic large ribosomal subunit"/>
    <property type="evidence" value="ECO:0007669"/>
    <property type="project" value="TreeGrafter"/>
</dbReference>
<dbReference type="GO" id="GO:0003735">
    <property type="term" value="F:structural constituent of ribosome"/>
    <property type="evidence" value="ECO:0007669"/>
    <property type="project" value="InterPro"/>
</dbReference>
<dbReference type="GO" id="GO:0006412">
    <property type="term" value="P:translation"/>
    <property type="evidence" value="ECO:0007669"/>
    <property type="project" value="UniProtKB-UniRule"/>
</dbReference>
<dbReference type="FunFam" id="2.40.50.100:FF:000004">
    <property type="entry name" value="50S ribosomal protein L27"/>
    <property type="match status" value="1"/>
</dbReference>
<dbReference type="Gene3D" id="2.40.50.100">
    <property type="match status" value="1"/>
</dbReference>
<dbReference type="HAMAP" id="MF_00539">
    <property type="entry name" value="Ribosomal_bL27"/>
    <property type="match status" value="1"/>
</dbReference>
<dbReference type="InterPro" id="IPR001684">
    <property type="entry name" value="Ribosomal_bL27"/>
</dbReference>
<dbReference type="InterPro" id="IPR018261">
    <property type="entry name" value="Ribosomal_bL27_CS"/>
</dbReference>
<dbReference type="NCBIfam" id="TIGR00062">
    <property type="entry name" value="L27"/>
    <property type="match status" value="1"/>
</dbReference>
<dbReference type="PANTHER" id="PTHR15893:SF0">
    <property type="entry name" value="LARGE RIBOSOMAL SUBUNIT PROTEIN BL27M"/>
    <property type="match status" value="1"/>
</dbReference>
<dbReference type="PANTHER" id="PTHR15893">
    <property type="entry name" value="RIBOSOMAL PROTEIN L27"/>
    <property type="match status" value="1"/>
</dbReference>
<dbReference type="Pfam" id="PF01016">
    <property type="entry name" value="Ribosomal_L27"/>
    <property type="match status" value="1"/>
</dbReference>
<dbReference type="PRINTS" id="PR00063">
    <property type="entry name" value="RIBOSOMALL27"/>
</dbReference>
<dbReference type="SUPFAM" id="SSF110324">
    <property type="entry name" value="Ribosomal L27 protein-like"/>
    <property type="match status" value="1"/>
</dbReference>
<dbReference type="PROSITE" id="PS00831">
    <property type="entry name" value="RIBOSOMAL_L27"/>
    <property type="match status" value="1"/>
</dbReference>
<sequence>MLKLNLQFFASKKGVGSTKNGRDSQSKRLGAKRADGQTVSAGSILYRQRGTKIHPGMNVGRGGDDTLFATATGVVRFERLGRDKKQVSVYPA</sequence>
<reference key="1">
    <citation type="submission" date="2008-04" db="EMBL/GenBank/DDBJ databases">
        <title>Complete sequence of chromosome of Exiguobacterium sibiricum 255-15.</title>
        <authorList>
            <consortium name="US DOE Joint Genome Institute"/>
            <person name="Copeland A."/>
            <person name="Lucas S."/>
            <person name="Lapidus A."/>
            <person name="Glavina del Rio T."/>
            <person name="Dalin E."/>
            <person name="Tice H."/>
            <person name="Bruce D."/>
            <person name="Goodwin L."/>
            <person name="Pitluck S."/>
            <person name="Kiss H."/>
            <person name="Chertkov O."/>
            <person name="Monk C."/>
            <person name="Brettin T."/>
            <person name="Detter J.C."/>
            <person name="Han C."/>
            <person name="Kuske C.R."/>
            <person name="Schmutz J."/>
            <person name="Larimer F."/>
            <person name="Land M."/>
            <person name="Hauser L."/>
            <person name="Kyrpides N."/>
            <person name="Mikhailova N."/>
            <person name="Vishnivetskaya T."/>
            <person name="Rodrigues D.F."/>
            <person name="Gilichinsky D."/>
            <person name="Tiedje J."/>
            <person name="Richardson P."/>
        </authorList>
    </citation>
    <scope>NUCLEOTIDE SEQUENCE [LARGE SCALE GENOMIC DNA]</scope>
    <source>
        <strain>DSM 17290 / CCUG 55495 / CIP 109462 / JCM 13490 / 255-15</strain>
    </source>
</reference>
<name>RL27_EXIS2</name>
<protein>
    <recommendedName>
        <fullName evidence="2">Large ribosomal subunit protein bL27</fullName>
    </recommendedName>
    <alternativeName>
        <fullName evidence="4">50S ribosomal protein L27</fullName>
    </alternativeName>
</protein>
<gene>
    <name evidence="2" type="primary">rpmA</name>
    <name type="ordered locus">Exig_2107</name>
</gene>
<feature type="propeptide" id="PRO_0000459894" evidence="1">
    <location>
        <begin position="1"/>
        <end position="9"/>
    </location>
</feature>
<feature type="chain" id="PRO_1000128751" description="Large ribosomal subunit protein bL27">
    <location>
        <begin position="10"/>
        <end position="92"/>
    </location>
</feature>
<feature type="region of interest" description="Disordered" evidence="3">
    <location>
        <begin position="14"/>
        <end position="34"/>
    </location>
</feature>